<reference key="1">
    <citation type="submission" date="2007-03" db="EMBL/GenBank/DDBJ databases">
        <title>Complete sequence of Prosthecochloris vibrioformis DSM 265.</title>
        <authorList>
            <consortium name="US DOE Joint Genome Institute"/>
            <person name="Copeland A."/>
            <person name="Lucas S."/>
            <person name="Lapidus A."/>
            <person name="Barry K."/>
            <person name="Detter J.C."/>
            <person name="Glavina del Rio T."/>
            <person name="Hammon N."/>
            <person name="Israni S."/>
            <person name="Pitluck S."/>
            <person name="Schmutz J."/>
            <person name="Larimer F."/>
            <person name="Land M."/>
            <person name="Hauser L."/>
            <person name="Mikhailova N."/>
            <person name="Li T."/>
            <person name="Overmann J."/>
            <person name="Schuster S.C."/>
            <person name="Bryant D.A."/>
            <person name="Richardson P."/>
        </authorList>
    </citation>
    <scope>NUCLEOTIDE SEQUENCE [LARGE SCALE GENOMIC DNA]</scope>
    <source>
        <strain>DSM 265 / 1930</strain>
    </source>
</reference>
<dbReference type="EC" id="6.1.1.3" evidence="1"/>
<dbReference type="EMBL" id="CP000607">
    <property type="protein sequence ID" value="ABP36213.1"/>
    <property type="molecule type" value="Genomic_DNA"/>
</dbReference>
<dbReference type="SMR" id="A4SCK4"/>
<dbReference type="STRING" id="290318.Cvib_0190"/>
<dbReference type="KEGG" id="pvi:Cvib_0190"/>
<dbReference type="eggNOG" id="COG0441">
    <property type="taxonomic scope" value="Bacteria"/>
</dbReference>
<dbReference type="HOGENOM" id="CLU_008554_0_1_10"/>
<dbReference type="OrthoDB" id="9802304at2"/>
<dbReference type="GO" id="GO:0005737">
    <property type="term" value="C:cytoplasm"/>
    <property type="evidence" value="ECO:0007669"/>
    <property type="project" value="UniProtKB-SubCell"/>
</dbReference>
<dbReference type="GO" id="GO:0005524">
    <property type="term" value="F:ATP binding"/>
    <property type="evidence" value="ECO:0007669"/>
    <property type="project" value="UniProtKB-UniRule"/>
</dbReference>
<dbReference type="GO" id="GO:0046872">
    <property type="term" value="F:metal ion binding"/>
    <property type="evidence" value="ECO:0007669"/>
    <property type="project" value="UniProtKB-KW"/>
</dbReference>
<dbReference type="GO" id="GO:0004829">
    <property type="term" value="F:threonine-tRNA ligase activity"/>
    <property type="evidence" value="ECO:0007669"/>
    <property type="project" value="UniProtKB-UniRule"/>
</dbReference>
<dbReference type="GO" id="GO:0000049">
    <property type="term" value="F:tRNA binding"/>
    <property type="evidence" value="ECO:0007669"/>
    <property type="project" value="UniProtKB-KW"/>
</dbReference>
<dbReference type="GO" id="GO:0006435">
    <property type="term" value="P:threonyl-tRNA aminoacylation"/>
    <property type="evidence" value="ECO:0007669"/>
    <property type="project" value="UniProtKB-UniRule"/>
</dbReference>
<dbReference type="CDD" id="cd01667">
    <property type="entry name" value="TGS_ThrRS"/>
    <property type="match status" value="1"/>
</dbReference>
<dbReference type="CDD" id="cd00860">
    <property type="entry name" value="ThrRS_anticodon"/>
    <property type="match status" value="1"/>
</dbReference>
<dbReference type="CDD" id="cd00771">
    <property type="entry name" value="ThrRS_core"/>
    <property type="match status" value="1"/>
</dbReference>
<dbReference type="FunFam" id="3.30.930.10:FF:000002">
    <property type="entry name" value="Threonine--tRNA ligase"/>
    <property type="match status" value="1"/>
</dbReference>
<dbReference type="FunFam" id="3.40.50.800:FF:000001">
    <property type="entry name" value="Threonine--tRNA ligase"/>
    <property type="match status" value="1"/>
</dbReference>
<dbReference type="FunFam" id="3.30.980.10:FF:000005">
    <property type="entry name" value="Threonyl-tRNA synthetase, mitochondrial"/>
    <property type="match status" value="1"/>
</dbReference>
<dbReference type="Gene3D" id="3.10.20.30">
    <property type="match status" value="1"/>
</dbReference>
<dbReference type="Gene3D" id="3.30.54.20">
    <property type="match status" value="1"/>
</dbReference>
<dbReference type="Gene3D" id="3.40.50.800">
    <property type="entry name" value="Anticodon-binding domain"/>
    <property type="match status" value="1"/>
</dbReference>
<dbReference type="Gene3D" id="3.30.930.10">
    <property type="entry name" value="Bira Bifunctional Protein, Domain 2"/>
    <property type="match status" value="1"/>
</dbReference>
<dbReference type="Gene3D" id="3.30.980.10">
    <property type="entry name" value="Threonyl-trna Synthetase, Chain A, domain 2"/>
    <property type="match status" value="1"/>
</dbReference>
<dbReference type="HAMAP" id="MF_00184">
    <property type="entry name" value="Thr_tRNA_synth"/>
    <property type="match status" value="1"/>
</dbReference>
<dbReference type="InterPro" id="IPR002314">
    <property type="entry name" value="aa-tRNA-synt_IIb"/>
</dbReference>
<dbReference type="InterPro" id="IPR006195">
    <property type="entry name" value="aa-tRNA-synth_II"/>
</dbReference>
<dbReference type="InterPro" id="IPR045864">
    <property type="entry name" value="aa-tRNA-synth_II/BPL/LPL"/>
</dbReference>
<dbReference type="InterPro" id="IPR004154">
    <property type="entry name" value="Anticodon-bd"/>
</dbReference>
<dbReference type="InterPro" id="IPR036621">
    <property type="entry name" value="Anticodon-bd_dom_sf"/>
</dbReference>
<dbReference type="InterPro" id="IPR012675">
    <property type="entry name" value="Beta-grasp_dom_sf"/>
</dbReference>
<dbReference type="InterPro" id="IPR004095">
    <property type="entry name" value="TGS"/>
</dbReference>
<dbReference type="InterPro" id="IPR012676">
    <property type="entry name" value="TGS-like"/>
</dbReference>
<dbReference type="InterPro" id="IPR002320">
    <property type="entry name" value="Thr-tRNA-ligase_IIa"/>
</dbReference>
<dbReference type="InterPro" id="IPR018163">
    <property type="entry name" value="Thr/Ala-tRNA-synth_IIc_edit"/>
</dbReference>
<dbReference type="InterPro" id="IPR047246">
    <property type="entry name" value="ThrRS_anticodon"/>
</dbReference>
<dbReference type="InterPro" id="IPR033728">
    <property type="entry name" value="ThrRS_core"/>
</dbReference>
<dbReference type="InterPro" id="IPR012947">
    <property type="entry name" value="tRNA_SAD"/>
</dbReference>
<dbReference type="NCBIfam" id="TIGR00418">
    <property type="entry name" value="thrS"/>
    <property type="match status" value="1"/>
</dbReference>
<dbReference type="PANTHER" id="PTHR11451:SF44">
    <property type="entry name" value="THREONINE--TRNA LIGASE, CHLOROPLASTIC_MITOCHONDRIAL 2"/>
    <property type="match status" value="1"/>
</dbReference>
<dbReference type="PANTHER" id="PTHR11451">
    <property type="entry name" value="THREONINE-TRNA LIGASE"/>
    <property type="match status" value="1"/>
</dbReference>
<dbReference type="Pfam" id="PF03129">
    <property type="entry name" value="HGTP_anticodon"/>
    <property type="match status" value="1"/>
</dbReference>
<dbReference type="Pfam" id="PF02824">
    <property type="entry name" value="TGS"/>
    <property type="match status" value="1"/>
</dbReference>
<dbReference type="Pfam" id="PF00587">
    <property type="entry name" value="tRNA-synt_2b"/>
    <property type="match status" value="1"/>
</dbReference>
<dbReference type="Pfam" id="PF07973">
    <property type="entry name" value="tRNA_SAD"/>
    <property type="match status" value="1"/>
</dbReference>
<dbReference type="PRINTS" id="PR01047">
    <property type="entry name" value="TRNASYNTHTHR"/>
</dbReference>
<dbReference type="SMART" id="SM00863">
    <property type="entry name" value="tRNA_SAD"/>
    <property type="match status" value="1"/>
</dbReference>
<dbReference type="SUPFAM" id="SSF52954">
    <property type="entry name" value="Class II aaRS ABD-related"/>
    <property type="match status" value="1"/>
</dbReference>
<dbReference type="SUPFAM" id="SSF55681">
    <property type="entry name" value="Class II aaRS and biotin synthetases"/>
    <property type="match status" value="1"/>
</dbReference>
<dbReference type="SUPFAM" id="SSF81271">
    <property type="entry name" value="TGS-like"/>
    <property type="match status" value="1"/>
</dbReference>
<dbReference type="SUPFAM" id="SSF55186">
    <property type="entry name" value="ThrRS/AlaRS common domain"/>
    <property type="match status" value="1"/>
</dbReference>
<dbReference type="PROSITE" id="PS50862">
    <property type="entry name" value="AA_TRNA_LIGASE_II"/>
    <property type="match status" value="1"/>
</dbReference>
<dbReference type="PROSITE" id="PS51880">
    <property type="entry name" value="TGS"/>
    <property type="match status" value="1"/>
</dbReference>
<accession>A4SCK4</accession>
<gene>
    <name evidence="1" type="primary">thrS</name>
    <name type="ordered locus">Cvib_0190</name>
</gene>
<name>SYT_CHLPM</name>
<protein>
    <recommendedName>
        <fullName evidence="1">Threonine--tRNA ligase</fullName>
        <ecNumber evidence="1">6.1.1.3</ecNumber>
    </recommendedName>
    <alternativeName>
        <fullName evidence="1">Threonyl-tRNA synthetase</fullName>
        <shortName evidence="1">ThrRS</shortName>
    </alternativeName>
</protein>
<organism>
    <name type="scientific">Chlorobium phaeovibrioides (strain DSM 265 / 1930)</name>
    <name type="common">Prosthecochloris vibrioformis (strain DSM 265)</name>
    <dbReference type="NCBI Taxonomy" id="290318"/>
    <lineage>
        <taxon>Bacteria</taxon>
        <taxon>Pseudomonadati</taxon>
        <taxon>Chlorobiota</taxon>
        <taxon>Chlorobiia</taxon>
        <taxon>Chlorobiales</taxon>
        <taxon>Chlorobiaceae</taxon>
        <taxon>Chlorobium/Pelodictyon group</taxon>
        <taxon>Chlorobium</taxon>
    </lineage>
</organism>
<proteinExistence type="inferred from homology"/>
<comment type="function">
    <text evidence="1">Catalyzes the attachment of threonine to tRNA(Thr) in a two-step reaction: L-threonine is first activated by ATP to form Thr-AMP and then transferred to the acceptor end of tRNA(Thr). Also edits incorrectly charged L-seryl-tRNA(Thr).</text>
</comment>
<comment type="catalytic activity">
    <reaction evidence="1">
        <text>tRNA(Thr) + L-threonine + ATP = L-threonyl-tRNA(Thr) + AMP + diphosphate + H(+)</text>
        <dbReference type="Rhea" id="RHEA:24624"/>
        <dbReference type="Rhea" id="RHEA-COMP:9670"/>
        <dbReference type="Rhea" id="RHEA-COMP:9704"/>
        <dbReference type="ChEBI" id="CHEBI:15378"/>
        <dbReference type="ChEBI" id="CHEBI:30616"/>
        <dbReference type="ChEBI" id="CHEBI:33019"/>
        <dbReference type="ChEBI" id="CHEBI:57926"/>
        <dbReference type="ChEBI" id="CHEBI:78442"/>
        <dbReference type="ChEBI" id="CHEBI:78534"/>
        <dbReference type="ChEBI" id="CHEBI:456215"/>
        <dbReference type="EC" id="6.1.1.3"/>
    </reaction>
</comment>
<comment type="cofactor">
    <cofactor evidence="1">
        <name>Zn(2+)</name>
        <dbReference type="ChEBI" id="CHEBI:29105"/>
    </cofactor>
    <text evidence="1">Binds 1 zinc ion per subunit.</text>
</comment>
<comment type="subunit">
    <text evidence="1">Homodimer.</text>
</comment>
<comment type="subcellular location">
    <subcellularLocation>
        <location evidence="1">Cytoplasm</location>
    </subcellularLocation>
</comment>
<comment type="similarity">
    <text evidence="1">Belongs to the class-II aminoacyl-tRNA synthetase family.</text>
</comment>
<keyword id="KW-0030">Aminoacyl-tRNA synthetase</keyword>
<keyword id="KW-0067">ATP-binding</keyword>
<keyword id="KW-0963">Cytoplasm</keyword>
<keyword id="KW-0436">Ligase</keyword>
<keyword id="KW-0479">Metal-binding</keyword>
<keyword id="KW-0547">Nucleotide-binding</keyword>
<keyword id="KW-0648">Protein biosynthesis</keyword>
<keyword id="KW-0694">RNA-binding</keyword>
<keyword id="KW-0820">tRNA-binding</keyword>
<keyword id="KW-0862">Zinc</keyword>
<feature type="chain" id="PRO_1000077369" description="Threonine--tRNA ligase">
    <location>
        <begin position="1"/>
        <end position="666"/>
    </location>
</feature>
<feature type="domain" description="TGS" evidence="2">
    <location>
        <begin position="7"/>
        <end position="70"/>
    </location>
</feature>
<feature type="region of interest" description="Catalytic" evidence="1">
    <location>
        <begin position="253"/>
        <end position="555"/>
    </location>
</feature>
<feature type="binding site" evidence="1">
    <location>
        <position position="351"/>
    </location>
    <ligand>
        <name>Zn(2+)</name>
        <dbReference type="ChEBI" id="CHEBI:29105"/>
    </ligand>
</feature>
<feature type="binding site" evidence="1">
    <location>
        <position position="402"/>
    </location>
    <ligand>
        <name>Zn(2+)</name>
        <dbReference type="ChEBI" id="CHEBI:29105"/>
    </ligand>
</feature>
<feature type="binding site" evidence="1">
    <location>
        <position position="532"/>
    </location>
    <ligand>
        <name>Zn(2+)</name>
        <dbReference type="ChEBI" id="CHEBI:29105"/>
    </ligand>
</feature>
<sequence>MSQNLDQQVTLTVTLPDGTTKPLPAGSTGMDIALEIGRRLAREAVAIKIDGKAVDLSAPLTADCTAEIITFDSPEGKEIFWHSASHIMAHAIEELFPGSKFGAGPAIEQGFYYDIASEHRFTEEDLRAIEERMLLIAGRDIPIVREEMPRIQAIEYFRTVREDPYKVEILTDTLKETETVSLYHEGGFTDLCSGPHLFSTAALKAVKLFNISASYWRGDQSRESMQRIYGIAFPTEKLLKAHLSALEEAKKRDHRKLGTELELFMLSPEIGSGLPVWLPKGAIIRQELESFLKEEQRRRGYLPVYTPHIGNIDLYKRSGHYPYYSDSQFPPLTYHDEEGKAEQYLLKPMNCPHHHLIYSSKMRSYRDLPVRLAEFGTVYRHEQSGELNGLVRARGFTQDDSHIYCRPDQLVDEICNAIDLTRYVFATLGFTEVETRLSMHDPLNPSKYGGTADVWEQAEKDVREAADRMKINYFIGVGEASFYGPKIDFIVRDALGRKWQLGTVQVDYVMPERFDLSYVGSDGQKHRPIVIHRAPFGSMERFIGVLIEHTAGNFPLWLAPVQAVVLPIAEDVHDYGSEVRDAMHRAGIRVELDVRNEKIGRKIREAELAKIPFMVIVGQKEKEGGSVSLRRHRIGDEGAFSIQEMTEKLLNEIAAKGLTTKPTTNA</sequence>
<evidence type="ECO:0000255" key="1">
    <source>
        <dbReference type="HAMAP-Rule" id="MF_00184"/>
    </source>
</evidence>
<evidence type="ECO:0000255" key="2">
    <source>
        <dbReference type="PROSITE-ProRule" id="PRU01228"/>
    </source>
</evidence>